<feature type="chain" id="PRO_1000212689" description="Adenosylcobinamide-GDP ribazoletransferase">
    <location>
        <begin position="1"/>
        <end position="249"/>
    </location>
</feature>
<feature type="transmembrane region" description="Helical" evidence="1">
    <location>
        <begin position="36"/>
        <end position="56"/>
    </location>
</feature>
<feature type="transmembrane region" description="Helical" evidence="1">
    <location>
        <begin position="57"/>
        <end position="77"/>
    </location>
</feature>
<feature type="transmembrane region" description="Helical" evidence="1">
    <location>
        <begin position="106"/>
        <end position="126"/>
    </location>
</feature>
<feature type="transmembrane region" description="Helical" evidence="1">
    <location>
        <begin position="133"/>
        <end position="153"/>
    </location>
</feature>
<feature type="transmembrane region" description="Helical" evidence="1">
    <location>
        <begin position="188"/>
        <end position="208"/>
    </location>
</feature>
<feature type="transmembrane region" description="Helical" evidence="1">
    <location>
        <begin position="226"/>
        <end position="246"/>
    </location>
</feature>
<keyword id="KW-1003">Cell membrane</keyword>
<keyword id="KW-0169">Cobalamin biosynthesis</keyword>
<keyword id="KW-0460">Magnesium</keyword>
<keyword id="KW-0472">Membrane</keyword>
<keyword id="KW-1185">Reference proteome</keyword>
<keyword id="KW-0808">Transferase</keyword>
<keyword id="KW-0812">Transmembrane</keyword>
<keyword id="KW-1133">Transmembrane helix</keyword>
<gene>
    <name evidence="1" type="primary">cobS</name>
    <name type="ordered locus">Dred_2703</name>
</gene>
<accession>A4J804</accession>
<name>COBS_DESRM</name>
<sequence length="249" mass="26931">MFSSLRLAISFLTIFPFYNKMADNKELAQSVSYYPLVGFLLGSIAAGVCYAMHSIGLNLAADVLGLVTIITLTGGLHQDGLMDTADGIFSGRELHRKLEIMKDSRVGAMGVIALATVLLLKIAFLFELDLAQKLTAFIMAPMAGRWAMVLAITRYPYARATGGLGACLKQAGKTQLALATLILVAGCLWLFGLPGLALLGIVFFITWLTVEFIVKRLGGMTGDTYGALGEMIETWVIFLILLGQQIRML</sequence>
<evidence type="ECO:0000255" key="1">
    <source>
        <dbReference type="HAMAP-Rule" id="MF_00719"/>
    </source>
</evidence>
<comment type="function">
    <text evidence="1">Joins adenosylcobinamide-GDP and alpha-ribazole to generate adenosylcobalamin (Ado-cobalamin). Also synthesizes adenosylcobalamin 5'-phosphate from adenosylcobinamide-GDP and alpha-ribazole 5'-phosphate.</text>
</comment>
<comment type="catalytic activity">
    <reaction evidence="1">
        <text>alpha-ribazole + adenosylcob(III)inamide-GDP = adenosylcob(III)alamin + GMP + H(+)</text>
        <dbReference type="Rhea" id="RHEA:16049"/>
        <dbReference type="ChEBI" id="CHEBI:10329"/>
        <dbReference type="ChEBI" id="CHEBI:15378"/>
        <dbReference type="ChEBI" id="CHEBI:18408"/>
        <dbReference type="ChEBI" id="CHEBI:58115"/>
        <dbReference type="ChEBI" id="CHEBI:60487"/>
        <dbReference type="EC" id="2.7.8.26"/>
    </reaction>
</comment>
<comment type="catalytic activity">
    <reaction evidence="1">
        <text>alpha-ribazole 5'-phosphate + adenosylcob(III)inamide-GDP = adenosylcob(III)alamin 5'-phosphate + GMP + H(+)</text>
        <dbReference type="Rhea" id="RHEA:23560"/>
        <dbReference type="ChEBI" id="CHEBI:15378"/>
        <dbReference type="ChEBI" id="CHEBI:57918"/>
        <dbReference type="ChEBI" id="CHEBI:58115"/>
        <dbReference type="ChEBI" id="CHEBI:60487"/>
        <dbReference type="ChEBI" id="CHEBI:60493"/>
        <dbReference type="EC" id="2.7.8.26"/>
    </reaction>
</comment>
<comment type="cofactor">
    <cofactor evidence="1">
        <name>Mg(2+)</name>
        <dbReference type="ChEBI" id="CHEBI:18420"/>
    </cofactor>
</comment>
<comment type="pathway">
    <text evidence="1">Cofactor biosynthesis; adenosylcobalamin biosynthesis; adenosylcobalamin from cob(II)yrinate a,c-diamide: step 7/7.</text>
</comment>
<comment type="subcellular location">
    <subcellularLocation>
        <location evidence="1">Cell membrane</location>
        <topology evidence="1">Multi-pass membrane protein</topology>
    </subcellularLocation>
</comment>
<comment type="similarity">
    <text evidence="1">Belongs to the CobS family.</text>
</comment>
<reference key="1">
    <citation type="submission" date="2007-03" db="EMBL/GenBank/DDBJ databases">
        <title>Complete sequence of Desulfotomaculum reducens MI-1.</title>
        <authorList>
            <consortium name="US DOE Joint Genome Institute"/>
            <person name="Copeland A."/>
            <person name="Lucas S."/>
            <person name="Lapidus A."/>
            <person name="Barry K."/>
            <person name="Detter J.C."/>
            <person name="Glavina del Rio T."/>
            <person name="Hammon N."/>
            <person name="Israni S."/>
            <person name="Dalin E."/>
            <person name="Tice H."/>
            <person name="Pitluck S."/>
            <person name="Sims D."/>
            <person name="Brettin T."/>
            <person name="Bruce D."/>
            <person name="Han C."/>
            <person name="Tapia R."/>
            <person name="Schmutz J."/>
            <person name="Larimer F."/>
            <person name="Land M."/>
            <person name="Hauser L."/>
            <person name="Kyrpides N."/>
            <person name="Kim E."/>
            <person name="Tebo B.M."/>
            <person name="Richardson P."/>
        </authorList>
    </citation>
    <scope>NUCLEOTIDE SEQUENCE [LARGE SCALE GENOMIC DNA]</scope>
    <source>
        <strain>ATCC BAA-1160 / DSM 100696 / MI-1</strain>
    </source>
</reference>
<proteinExistence type="inferred from homology"/>
<protein>
    <recommendedName>
        <fullName evidence="1">Adenosylcobinamide-GDP ribazoletransferase</fullName>
        <ecNumber evidence="1">2.7.8.26</ecNumber>
    </recommendedName>
    <alternativeName>
        <fullName evidence="1">Cobalamin synthase</fullName>
    </alternativeName>
    <alternativeName>
        <fullName evidence="1">Cobalamin-5'-phosphate synthase</fullName>
    </alternativeName>
</protein>
<dbReference type="EC" id="2.7.8.26" evidence="1"/>
<dbReference type="EMBL" id="CP000612">
    <property type="protein sequence ID" value="ABO51207.1"/>
    <property type="molecule type" value="Genomic_DNA"/>
</dbReference>
<dbReference type="RefSeq" id="WP_011879004.1">
    <property type="nucleotide sequence ID" value="NC_009253.1"/>
</dbReference>
<dbReference type="STRING" id="349161.Dred_2703"/>
<dbReference type="KEGG" id="drm:Dred_2703"/>
<dbReference type="eggNOG" id="COG0368">
    <property type="taxonomic scope" value="Bacteria"/>
</dbReference>
<dbReference type="HOGENOM" id="CLU_057426_3_1_9"/>
<dbReference type="OrthoDB" id="9794626at2"/>
<dbReference type="UniPathway" id="UPA00148">
    <property type="reaction ID" value="UER00238"/>
</dbReference>
<dbReference type="Proteomes" id="UP000001556">
    <property type="component" value="Chromosome"/>
</dbReference>
<dbReference type="GO" id="GO:0005886">
    <property type="term" value="C:plasma membrane"/>
    <property type="evidence" value="ECO:0007669"/>
    <property type="project" value="UniProtKB-SubCell"/>
</dbReference>
<dbReference type="GO" id="GO:0051073">
    <property type="term" value="F:adenosylcobinamide-GDP ribazoletransferase activity"/>
    <property type="evidence" value="ECO:0007669"/>
    <property type="project" value="UniProtKB-UniRule"/>
</dbReference>
<dbReference type="GO" id="GO:0008818">
    <property type="term" value="F:cobalamin 5'-phosphate synthase activity"/>
    <property type="evidence" value="ECO:0007669"/>
    <property type="project" value="UniProtKB-UniRule"/>
</dbReference>
<dbReference type="GO" id="GO:0009236">
    <property type="term" value="P:cobalamin biosynthetic process"/>
    <property type="evidence" value="ECO:0007669"/>
    <property type="project" value="UniProtKB-UniRule"/>
</dbReference>
<dbReference type="HAMAP" id="MF_00719">
    <property type="entry name" value="CobS"/>
    <property type="match status" value="1"/>
</dbReference>
<dbReference type="InterPro" id="IPR003805">
    <property type="entry name" value="CobS"/>
</dbReference>
<dbReference type="NCBIfam" id="TIGR00317">
    <property type="entry name" value="cobS"/>
    <property type="match status" value="1"/>
</dbReference>
<dbReference type="PANTHER" id="PTHR34148">
    <property type="entry name" value="ADENOSYLCOBINAMIDE-GDP RIBAZOLETRANSFERASE"/>
    <property type="match status" value="1"/>
</dbReference>
<dbReference type="PANTHER" id="PTHR34148:SF1">
    <property type="entry name" value="ADENOSYLCOBINAMIDE-GDP RIBAZOLETRANSFERASE"/>
    <property type="match status" value="1"/>
</dbReference>
<dbReference type="Pfam" id="PF02654">
    <property type="entry name" value="CobS"/>
    <property type="match status" value="1"/>
</dbReference>
<organism>
    <name type="scientific">Desulforamulus reducens (strain ATCC BAA-1160 / DSM 100696 / MI-1)</name>
    <name type="common">Desulfotomaculum reducens</name>
    <dbReference type="NCBI Taxonomy" id="349161"/>
    <lineage>
        <taxon>Bacteria</taxon>
        <taxon>Bacillati</taxon>
        <taxon>Bacillota</taxon>
        <taxon>Clostridia</taxon>
        <taxon>Eubacteriales</taxon>
        <taxon>Peptococcaceae</taxon>
        <taxon>Desulforamulus</taxon>
    </lineage>
</organism>